<feature type="chain" id="PRO_0000319586" description="INO80 complex subunit D">
    <location>
        <begin position="1"/>
        <end position="1021"/>
    </location>
</feature>
<feature type="region of interest" description="Disordered" evidence="3">
    <location>
        <begin position="194"/>
        <end position="239"/>
    </location>
</feature>
<feature type="region of interest" description="Disordered" evidence="3">
    <location>
        <begin position="514"/>
        <end position="570"/>
    </location>
</feature>
<feature type="region of interest" description="Disordered" evidence="3">
    <location>
        <begin position="808"/>
        <end position="844"/>
    </location>
</feature>
<feature type="region of interest" description="Disordered" evidence="3">
    <location>
        <begin position="911"/>
        <end position="940"/>
    </location>
</feature>
<feature type="region of interest" description="Disordered" evidence="3">
    <location>
        <begin position="976"/>
        <end position="1021"/>
    </location>
</feature>
<feature type="compositionally biased region" description="Polar residues" evidence="3">
    <location>
        <begin position="224"/>
        <end position="239"/>
    </location>
</feature>
<feature type="compositionally biased region" description="Basic residues" evidence="3">
    <location>
        <begin position="520"/>
        <end position="554"/>
    </location>
</feature>
<feature type="compositionally biased region" description="Low complexity" evidence="3">
    <location>
        <begin position="911"/>
        <end position="926"/>
    </location>
</feature>
<feature type="compositionally biased region" description="Polar residues" evidence="3">
    <location>
        <begin position="931"/>
        <end position="940"/>
    </location>
</feature>
<feature type="compositionally biased region" description="Low complexity" evidence="3">
    <location>
        <begin position="995"/>
        <end position="1014"/>
    </location>
</feature>
<feature type="modified residue" description="Phosphoserine" evidence="2">
    <location>
        <position position="132"/>
    </location>
</feature>
<feature type="cross-link" description="Glycyl lysine isopeptide (Lys-Gly) (interchain with G-Cter in SUMO2)" evidence="2">
    <location>
        <position position="87"/>
    </location>
</feature>
<feature type="splice variant" id="VSP_060240" description="In isoform 4.">
    <location>
        <begin position="1"/>
        <end position="105"/>
    </location>
</feature>
<gene>
    <name evidence="5" type="primary">Ino80d</name>
</gene>
<organism>
    <name type="scientific">Mus musculus</name>
    <name type="common">Mouse</name>
    <dbReference type="NCBI Taxonomy" id="10090"/>
    <lineage>
        <taxon>Eukaryota</taxon>
        <taxon>Metazoa</taxon>
        <taxon>Chordata</taxon>
        <taxon>Craniata</taxon>
        <taxon>Vertebrata</taxon>
        <taxon>Euteleostomi</taxon>
        <taxon>Mammalia</taxon>
        <taxon>Eutheria</taxon>
        <taxon>Euarchontoglires</taxon>
        <taxon>Glires</taxon>
        <taxon>Rodentia</taxon>
        <taxon>Myomorpha</taxon>
        <taxon>Muroidea</taxon>
        <taxon>Muridae</taxon>
        <taxon>Murinae</taxon>
        <taxon>Mus</taxon>
        <taxon>Mus</taxon>
    </lineage>
</organism>
<proteinExistence type="evidence at transcript level"/>
<keyword id="KW-0025">Alternative splicing</keyword>
<keyword id="KW-0227">DNA damage</keyword>
<keyword id="KW-0233">DNA recombination</keyword>
<keyword id="KW-0234">DNA repair</keyword>
<keyword id="KW-1017">Isopeptide bond</keyword>
<keyword id="KW-0539">Nucleus</keyword>
<keyword id="KW-0597">Phosphoprotein</keyword>
<keyword id="KW-1185">Reference proteome</keyword>
<keyword id="KW-0804">Transcription</keyword>
<keyword id="KW-0805">Transcription regulation</keyword>
<keyword id="KW-0832">Ubl conjugation</keyword>
<name>IN80D_MOUSE</name>
<sequence>MYEGKHIHFSEVDNKPLCSYSPKLCKQRRLNGYAFCIRHVLEDKTAPFKQCEYVAKYNSQRCTNPIPKSEDRRYCNSHLQVLGFIPKKERKKKTDPVDEVKARHQMDAMAFSLTVPTLALKMPNGLDSMSLSPPGARVPLHYLDTELEDPFAFNEEDDDLKKGVTVRKKLQSKLAQNRQRQRETEILKVRQEHFSTPPTPPQQHTHLSPLSTSLKPPAPPQGSVCKSPQPQNTSLPMQGVAPTTHSIAQIRQASHKRPLPLLPSSRAPISDAPRTDRILMKAAAFSPHLSCISRLQRLVKLCTQKRQLDADLFPHLGLDWSEESGEELEDADQASPYQVAWSIRETLRHERHTSDDDDMESRSSRVTQLCTYFQQKYKHLCRLERAESRQKKCRHTFRKALLQAASKEPECTGQLIQELRRAACSRASLRQTKLKEVEPAACSGTVKGEQCTKQALPFTRHCFQHILLNRSQQLFSSCTAKFADGQQCSVPVFDITHQTPLCEEHAKKMDNFLRGDNSRKVQHQQQRKPRKKTKPPALTKKHKKKRRRGPRRPQKPIPPAVPQGNLSMPTSVSLPVEASQMRSPSTPELSADELPDDIANEITDIPHDLELNQEDFADVLPRLPDDLQDFDFFEGKNGDLLPTTEEAEELERALQAVTSLECLSTIGVLSQSDGVPVQGLSDRGMGVFSTGTDASGIQSLSREVNTDLGELLNGRIVHDSFSSLELDENLLHSAPLSSPPTALAGQIQGQFSAPASAGLTSATLLSQSALGERAFPGQFHGLHDGSHASQRPHPAQLLSKADDLITSRQQYSSDHSHSSPHGSHYDSEHVPSPYSDHITSPHTSYSGDNMAATFSAEMPIMAQHLLPTQLEVPLGGVVNPRTHWGNLPVNLGDPSAFSNLLGADGHLLSTSLSTPPTTSNSETTQPAFATVTPSSSSVLPGLPQTSFSGMGPSAELMASTSPKQQLPQFSAAFGHQLSSHSGIPKDLQPSHSSIAPPTGFTATGATATSTNNASPPFPSPN</sequence>
<accession>Q66JY2</accession>
<accession>E9Q9Q0</accession>
<accession>E9QLE8</accession>
<accession>Q8BQK5</accession>
<reference key="1">
    <citation type="journal article" date="2009" name="PLoS Biol.">
        <title>Lineage-specific biology revealed by a finished genome assembly of the mouse.</title>
        <authorList>
            <person name="Church D.M."/>
            <person name="Goodstadt L."/>
            <person name="Hillier L.W."/>
            <person name="Zody M.C."/>
            <person name="Goldstein S."/>
            <person name="She X."/>
            <person name="Bult C.J."/>
            <person name="Agarwala R."/>
            <person name="Cherry J.L."/>
            <person name="DiCuccio M."/>
            <person name="Hlavina W."/>
            <person name="Kapustin Y."/>
            <person name="Meric P."/>
            <person name="Maglott D."/>
            <person name="Birtle Z."/>
            <person name="Marques A.C."/>
            <person name="Graves T."/>
            <person name="Zhou S."/>
            <person name="Teague B."/>
            <person name="Potamousis K."/>
            <person name="Churas C."/>
            <person name="Place M."/>
            <person name="Herschleb J."/>
            <person name="Runnheim R."/>
            <person name="Forrest D."/>
            <person name="Amos-Landgraf J."/>
            <person name="Schwartz D.C."/>
            <person name="Cheng Z."/>
            <person name="Lindblad-Toh K."/>
            <person name="Eichler E.E."/>
            <person name="Ponting C.P."/>
        </authorList>
    </citation>
    <scope>NUCLEOTIDE SEQUENCE [LARGE SCALE GENOMIC DNA]</scope>
    <source>
        <strain>C57BL/6J</strain>
    </source>
</reference>
<reference key="2">
    <citation type="journal article" date="2005" name="Science">
        <title>The transcriptional landscape of the mammalian genome.</title>
        <authorList>
            <person name="Carninci P."/>
            <person name="Kasukawa T."/>
            <person name="Katayama S."/>
            <person name="Gough J."/>
            <person name="Frith M.C."/>
            <person name="Maeda N."/>
            <person name="Oyama R."/>
            <person name="Ravasi T."/>
            <person name="Lenhard B."/>
            <person name="Wells C."/>
            <person name="Kodzius R."/>
            <person name="Shimokawa K."/>
            <person name="Bajic V.B."/>
            <person name="Brenner S.E."/>
            <person name="Batalov S."/>
            <person name="Forrest A.R."/>
            <person name="Zavolan M."/>
            <person name="Davis M.J."/>
            <person name="Wilming L.G."/>
            <person name="Aidinis V."/>
            <person name="Allen J.E."/>
            <person name="Ambesi-Impiombato A."/>
            <person name="Apweiler R."/>
            <person name="Aturaliya R.N."/>
            <person name="Bailey T.L."/>
            <person name="Bansal M."/>
            <person name="Baxter L."/>
            <person name="Beisel K.W."/>
            <person name="Bersano T."/>
            <person name="Bono H."/>
            <person name="Chalk A.M."/>
            <person name="Chiu K.P."/>
            <person name="Choudhary V."/>
            <person name="Christoffels A."/>
            <person name="Clutterbuck D.R."/>
            <person name="Crowe M.L."/>
            <person name="Dalla E."/>
            <person name="Dalrymple B.P."/>
            <person name="de Bono B."/>
            <person name="Della Gatta G."/>
            <person name="di Bernardo D."/>
            <person name="Down T."/>
            <person name="Engstrom P."/>
            <person name="Fagiolini M."/>
            <person name="Faulkner G."/>
            <person name="Fletcher C.F."/>
            <person name="Fukushima T."/>
            <person name="Furuno M."/>
            <person name="Futaki S."/>
            <person name="Gariboldi M."/>
            <person name="Georgii-Hemming P."/>
            <person name="Gingeras T.R."/>
            <person name="Gojobori T."/>
            <person name="Green R.E."/>
            <person name="Gustincich S."/>
            <person name="Harbers M."/>
            <person name="Hayashi Y."/>
            <person name="Hensch T.K."/>
            <person name="Hirokawa N."/>
            <person name="Hill D."/>
            <person name="Huminiecki L."/>
            <person name="Iacono M."/>
            <person name="Ikeo K."/>
            <person name="Iwama A."/>
            <person name="Ishikawa T."/>
            <person name="Jakt M."/>
            <person name="Kanapin A."/>
            <person name="Katoh M."/>
            <person name="Kawasawa Y."/>
            <person name="Kelso J."/>
            <person name="Kitamura H."/>
            <person name="Kitano H."/>
            <person name="Kollias G."/>
            <person name="Krishnan S.P."/>
            <person name="Kruger A."/>
            <person name="Kummerfeld S.K."/>
            <person name="Kurochkin I.V."/>
            <person name="Lareau L.F."/>
            <person name="Lazarevic D."/>
            <person name="Lipovich L."/>
            <person name="Liu J."/>
            <person name="Liuni S."/>
            <person name="McWilliam S."/>
            <person name="Madan Babu M."/>
            <person name="Madera M."/>
            <person name="Marchionni L."/>
            <person name="Matsuda H."/>
            <person name="Matsuzawa S."/>
            <person name="Miki H."/>
            <person name="Mignone F."/>
            <person name="Miyake S."/>
            <person name="Morris K."/>
            <person name="Mottagui-Tabar S."/>
            <person name="Mulder N."/>
            <person name="Nakano N."/>
            <person name="Nakauchi H."/>
            <person name="Ng P."/>
            <person name="Nilsson R."/>
            <person name="Nishiguchi S."/>
            <person name="Nishikawa S."/>
            <person name="Nori F."/>
            <person name="Ohara O."/>
            <person name="Okazaki Y."/>
            <person name="Orlando V."/>
            <person name="Pang K.C."/>
            <person name="Pavan W.J."/>
            <person name="Pavesi G."/>
            <person name="Pesole G."/>
            <person name="Petrovsky N."/>
            <person name="Piazza S."/>
            <person name="Reed J."/>
            <person name="Reid J.F."/>
            <person name="Ring B.Z."/>
            <person name="Ringwald M."/>
            <person name="Rost B."/>
            <person name="Ruan Y."/>
            <person name="Salzberg S.L."/>
            <person name="Sandelin A."/>
            <person name="Schneider C."/>
            <person name="Schoenbach C."/>
            <person name="Sekiguchi K."/>
            <person name="Semple C.A."/>
            <person name="Seno S."/>
            <person name="Sessa L."/>
            <person name="Sheng Y."/>
            <person name="Shibata Y."/>
            <person name="Shimada H."/>
            <person name="Shimada K."/>
            <person name="Silva D."/>
            <person name="Sinclair B."/>
            <person name="Sperling S."/>
            <person name="Stupka E."/>
            <person name="Sugiura K."/>
            <person name="Sultana R."/>
            <person name="Takenaka Y."/>
            <person name="Taki K."/>
            <person name="Tammoja K."/>
            <person name="Tan S.L."/>
            <person name="Tang S."/>
            <person name="Taylor M.S."/>
            <person name="Tegner J."/>
            <person name="Teichmann S.A."/>
            <person name="Ueda H.R."/>
            <person name="van Nimwegen E."/>
            <person name="Verardo R."/>
            <person name="Wei C.L."/>
            <person name="Yagi K."/>
            <person name="Yamanishi H."/>
            <person name="Zabarovsky E."/>
            <person name="Zhu S."/>
            <person name="Zimmer A."/>
            <person name="Hide W."/>
            <person name="Bult C."/>
            <person name="Grimmond S.M."/>
            <person name="Teasdale R.D."/>
            <person name="Liu E.T."/>
            <person name="Brusic V."/>
            <person name="Quackenbush J."/>
            <person name="Wahlestedt C."/>
            <person name="Mattick J.S."/>
            <person name="Hume D.A."/>
            <person name="Kai C."/>
            <person name="Sasaki D."/>
            <person name="Tomaru Y."/>
            <person name="Fukuda S."/>
            <person name="Kanamori-Katayama M."/>
            <person name="Suzuki M."/>
            <person name="Aoki J."/>
            <person name="Arakawa T."/>
            <person name="Iida J."/>
            <person name="Imamura K."/>
            <person name="Itoh M."/>
            <person name="Kato T."/>
            <person name="Kawaji H."/>
            <person name="Kawagashira N."/>
            <person name="Kawashima T."/>
            <person name="Kojima M."/>
            <person name="Kondo S."/>
            <person name="Konno H."/>
            <person name="Nakano K."/>
            <person name="Ninomiya N."/>
            <person name="Nishio T."/>
            <person name="Okada M."/>
            <person name="Plessy C."/>
            <person name="Shibata K."/>
            <person name="Shiraki T."/>
            <person name="Suzuki S."/>
            <person name="Tagami M."/>
            <person name="Waki K."/>
            <person name="Watahiki A."/>
            <person name="Okamura-Oho Y."/>
            <person name="Suzuki H."/>
            <person name="Kawai J."/>
            <person name="Hayashizaki Y."/>
        </authorList>
    </citation>
    <scope>NUCLEOTIDE SEQUENCE [LARGE SCALE MRNA] OF 1-539 (ISOFORM 4)</scope>
    <source>
        <strain>C57BL/6J</strain>
    </source>
</reference>
<reference key="3">
    <citation type="journal article" date="2004" name="Genome Res.">
        <title>The status, quality, and expansion of the NIH full-length cDNA project: the Mammalian Gene Collection (MGC).</title>
        <authorList>
            <consortium name="The MGC Project Team"/>
        </authorList>
    </citation>
    <scope>NUCLEOTIDE SEQUENCE [LARGE SCALE MRNA] OF 99-717 (ISOFORM 3)</scope>
    <source>
        <strain>C57BL/6J</strain>
        <tissue>Egg</tissue>
    </source>
</reference>
<comment type="function">
    <text evidence="1">Putative regulatory component of the chromatin remodeling INO80 complex which is involved in transcriptional regulation, DNA replication and probably DNA repair.</text>
</comment>
<comment type="subunit">
    <text evidence="1">Component of the chromatin remodeling INO80 complex; specifically part of a complex module associated with the N-terminus of INO80.</text>
</comment>
<comment type="subcellular location">
    <subcellularLocation>
        <location evidence="1">Nucleus</location>
    </subcellularLocation>
</comment>
<comment type="alternative products">
    <event type="alternative splicing"/>
    <isoform>
        <id>Q66JY2-3</id>
        <name>3</name>
        <sequence type="displayed"/>
    </isoform>
    <isoform>
        <id>Q66JY2-4</id>
        <name>4</name>
        <sequence type="described" ref="VSP_060240"/>
    </isoform>
</comment>
<comment type="similarity">
    <text evidence="4">Belongs to the INO80D family.</text>
</comment>
<comment type="sequence caution" evidence="4">
    <conflict type="erroneous initiation">
        <sequence resource="EMBL-CDS" id="AAH80705"/>
    </conflict>
    <text>Truncated N-terminus.</text>
</comment>
<comment type="sequence caution" evidence="4">
    <conflict type="miscellaneous discrepancy">
        <sequence resource="EMBL-CDS" id="AAH80705"/>
    </conflict>
    <text>Contaminating sequence. Potential poly-A sequence.</text>
</comment>
<dbReference type="EMBL" id="AL645950">
    <property type="status" value="NOT_ANNOTATED_CDS"/>
    <property type="molecule type" value="Genomic_DNA"/>
</dbReference>
<dbReference type="EMBL" id="AL645685">
    <property type="status" value="NOT_ANNOTATED_CDS"/>
    <property type="molecule type" value="Genomic_DNA"/>
</dbReference>
<dbReference type="EMBL" id="AK049468">
    <property type="protein sequence ID" value="BAC33763.1"/>
    <property type="molecule type" value="mRNA"/>
</dbReference>
<dbReference type="EMBL" id="BC080705">
    <property type="protein sequence ID" value="AAH80705.1"/>
    <property type="status" value="ALT_SEQ"/>
    <property type="molecule type" value="mRNA"/>
</dbReference>
<dbReference type="CCDS" id="CCDS35594.1">
    <molecule id="Q66JY2-4"/>
</dbReference>
<dbReference type="CCDS" id="CCDS48277.1">
    <molecule id="Q66JY2-3"/>
</dbReference>
<dbReference type="RefSeq" id="NP_001074905.1">
    <molecule id="Q66JY2-4"/>
    <property type="nucleotide sequence ID" value="NM_001081436.3"/>
</dbReference>
<dbReference type="RefSeq" id="NP_001108081.1">
    <molecule id="Q66JY2-3"/>
    <property type="nucleotide sequence ID" value="NM_001114609.2"/>
</dbReference>
<dbReference type="RefSeq" id="NP_001393630.1">
    <molecule id="Q66JY2-3"/>
    <property type="nucleotide sequence ID" value="NM_001406701.1"/>
</dbReference>
<dbReference type="RefSeq" id="NP_001393631.1">
    <molecule id="Q66JY2-3"/>
    <property type="nucleotide sequence ID" value="NM_001406702.1"/>
</dbReference>
<dbReference type="RefSeq" id="NP_001393632.1">
    <molecule id="Q66JY2-3"/>
    <property type="nucleotide sequence ID" value="NM_001406703.1"/>
</dbReference>
<dbReference type="RefSeq" id="NP_001393633.1">
    <molecule id="Q66JY2-3"/>
    <property type="nucleotide sequence ID" value="NM_001406704.1"/>
</dbReference>
<dbReference type="RefSeq" id="NP_001393634.1">
    <molecule id="Q66JY2-3"/>
    <property type="nucleotide sequence ID" value="NM_001406705.1"/>
</dbReference>
<dbReference type="RefSeq" id="NP_001393635.1">
    <molecule id="Q66JY2-3"/>
    <property type="nucleotide sequence ID" value="NM_001406706.1"/>
</dbReference>
<dbReference type="RefSeq" id="NP_001393636.1">
    <molecule id="Q66JY2-3"/>
    <property type="nucleotide sequence ID" value="NM_001406707.1"/>
</dbReference>
<dbReference type="RefSeq" id="NP_001393637.1">
    <molecule id="Q66JY2-3"/>
    <property type="nucleotide sequence ID" value="NM_001406708.1"/>
</dbReference>
<dbReference type="RefSeq" id="NP_001393638.1">
    <molecule id="Q66JY2-3"/>
    <property type="nucleotide sequence ID" value="NM_001406709.1"/>
</dbReference>
<dbReference type="RefSeq" id="NP_001393639.1">
    <molecule id="Q66JY2-4"/>
    <property type="nucleotide sequence ID" value="NM_001406710.1"/>
</dbReference>
<dbReference type="RefSeq" id="NP_001393640.1">
    <molecule id="Q66JY2-4"/>
    <property type="nucleotide sequence ID" value="NM_001406711.1"/>
</dbReference>
<dbReference type="RefSeq" id="NP_001393641.1">
    <molecule id="Q66JY2-4"/>
    <property type="nucleotide sequence ID" value="NM_001406712.1"/>
</dbReference>
<dbReference type="RefSeq" id="NP_001393642.1">
    <molecule id="Q66JY2-4"/>
    <property type="nucleotide sequence ID" value="NM_001406713.1"/>
</dbReference>
<dbReference type="RefSeq" id="NP_001393643.1">
    <molecule id="Q66JY2-4"/>
    <property type="nucleotide sequence ID" value="NM_001406714.1"/>
</dbReference>
<dbReference type="RefSeq" id="XP_006496009.1">
    <property type="nucleotide sequence ID" value="XM_006495946.2"/>
</dbReference>
<dbReference type="RefSeq" id="XP_006496010.1">
    <property type="nucleotide sequence ID" value="XM_006495947.2"/>
</dbReference>
<dbReference type="RefSeq" id="XP_006496011.1">
    <property type="nucleotide sequence ID" value="XM_006495948.2"/>
</dbReference>
<dbReference type="SMR" id="Q66JY2"/>
<dbReference type="BioGRID" id="230598">
    <property type="interactions" value="2"/>
</dbReference>
<dbReference type="ComplexPortal" id="CPX-878">
    <property type="entry name" value="INO80 chromatin remodeling complex"/>
</dbReference>
<dbReference type="FunCoup" id="Q66JY2">
    <property type="interactions" value="1721"/>
</dbReference>
<dbReference type="STRING" id="10090.ENSMUSP00000130864"/>
<dbReference type="GlyGen" id="Q66JY2">
    <property type="glycosylation" value="2 sites"/>
</dbReference>
<dbReference type="iPTMnet" id="Q66JY2"/>
<dbReference type="PhosphoSitePlus" id="Q66JY2"/>
<dbReference type="PaxDb" id="10090-ENSMUSP00000130864"/>
<dbReference type="PeptideAtlas" id="Q66JY2"/>
<dbReference type="ProteomicsDB" id="269313">
    <molecule id="Q66JY2-3"/>
</dbReference>
<dbReference type="ProteomicsDB" id="320923"/>
<dbReference type="Antibodypedia" id="51926">
    <property type="antibodies" value="50 antibodies from 13 providers"/>
</dbReference>
<dbReference type="Ensembl" id="ENSMUST00000097718.10">
    <molecule id="Q66JY2-3"/>
    <property type="protein sequence ID" value="ENSMUSP00000095325.4"/>
    <property type="gene ID" value="ENSMUSG00000040865.17"/>
</dbReference>
<dbReference type="Ensembl" id="ENSMUST00000133236.8">
    <molecule id="Q66JY2-4"/>
    <property type="protein sequence ID" value="ENSMUSP00000123430.2"/>
    <property type="gene ID" value="ENSMUSG00000040865.17"/>
</dbReference>
<dbReference type="Ensembl" id="ENSMUST00000137511.9">
    <molecule id="Q66JY2-3"/>
    <property type="protein sequence ID" value="ENSMUSP00000119118.3"/>
    <property type="gene ID" value="ENSMUSG00000040865.17"/>
</dbReference>
<dbReference type="Ensembl" id="ENSMUST00000153992.3">
    <molecule id="Q66JY2-4"/>
    <property type="protein sequence ID" value="ENSMUSP00000115332.3"/>
    <property type="gene ID" value="ENSMUSG00000040865.17"/>
</dbReference>
<dbReference type="GeneID" id="227195"/>
<dbReference type="KEGG" id="mmu:227195"/>
<dbReference type="UCSC" id="uc011wmc.1">
    <property type="organism name" value="mouse"/>
</dbReference>
<dbReference type="AGR" id="MGI:3027003"/>
<dbReference type="CTD" id="54891"/>
<dbReference type="MGI" id="MGI:3027003">
    <property type="gene designation" value="Ino80d"/>
</dbReference>
<dbReference type="VEuPathDB" id="HostDB:ENSMUSG00000040865"/>
<dbReference type="eggNOG" id="ENOG502QQC5">
    <property type="taxonomic scope" value="Eukaryota"/>
</dbReference>
<dbReference type="GeneTree" id="ENSGT00940000157974"/>
<dbReference type="HOGENOM" id="CLU_329723_0_0_1"/>
<dbReference type="InParanoid" id="Q66JY2"/>
<dbReference type="OMA" id="SWRPQNG"/>
<dbReference type="OrthoDB" id="10038011at2759"/>
<dbReference type="TreeFam" id="TF324169"/>
<dbReference type="Reactome" id="R-MMU-5689603">
    <property type="pathway name" value="UCH proteinases"/>
</dbReference>
<dbReference type="Reactome" id="R-MMU-5696394">
    <property type="pathway name" value="DNA Damage Recognition in GG-NER"/>
</dbReference>
<dbReference type="BioGRID-ORCS" id="227195">
    <property type="hits" value="3 hits in 117 CRISPR screens"/>
</dbReference>
<dbReference type="ChiTaRS" id="Ino80d">
    <property type="organism name" value="mouse"/>
</dbReference>
<dbReference type="PRO" id="PR:Q66JY2"/>
<dbReference type="Proteomes" id="UP000000589">
    <property type="component" value="Chromosome 1"/>
</dbReference>
<dbReference type="RNAct" id="Q66JY2">
    <property type="molecule type" value="protein"/>
</dbReference>
<dbReference type="Bgee" id="ENSMUSG00000040865">
    <property type="expression patterns" value="Expressed in animal zygote and 218 other cell types or tissues"/>
</dbReference>
<dbReference type="ExpressionAtlas" id="Q66JY2">
    <property type="expression patterns" value="baseline and differential"/>
</dbReference>
<dbReference type="GO" id="GO:0031011">
    <property type="term" value="C:Ino80 complex"/>
    <property type="evidence" value="ECO:0000266"/>
    <property type="project" value="ComplexPortal"/>
</dbReference>
<dbReference type="GO" id="GO:0006338">
    <property type="term" value="P:chromatin remodeling"/>
    <property type="evidence" value="ECO:0000266"/>
    <property type="project" value="ComplexPortal"/>
</dbReference>
<dbReference type="GO" id="GO:0006310">
    <property type="term" value="P:DNA recombination"/>
    <property type="evidence" value="ECO:0007669"/>
    <property type="project" value="UniProtKB-KW"/>
</dbReference>
<dbReference type="GO" id="GO:0006281">
    <property type="term" value="P:DNA repair"/>
    <property type="evidence" value="ECO:0007669"/>
    <property type="project" value="UniProtKB-KW"/>
</dbReference>
<dbReference type="GO" id="GO:0045739">
    <property type="term" value="P:positive regulation of DNA repair"/>
    <property type="evidence" value="ECO:0000314"/>
    <property type="project" value="ComplexPortal"/>
</dbReference>
<dbReference type="GO" id="GO:0045893">
    <property type="term" value="P:positive regulation of DNA-templated transcription"/>
    <property type="evidence" value="ECO:0000266"/>
    <property type="project" value="ComplexPortal"/>
</dbReference>
<dbReference type="GO" id="GO:1904507">
    <property type="term" value="P:positive regulation of telomere maintenance in response to DNA damage"/>
    <property type="evidence" value="ECO:0000315"/>
    <property type="project" value="ComplexPortal"/>
</dbReference>
<dbReference type="GO" id="GO:0051726">
    <property type="term" value="P:regulation of cell cycle"/>
    <property type="evidence" value="ECO:0000266"/>
    <property type="project" value="ComplexPortal"/>
</dbReference>
<dbReference type="GO" id="GO:0033044">
    <property type="term" value="P:regulation of chromosome organization"/>
    <property type="evidence" value="ECO:0000266"/>
    <property type="project" value="ComplexPortal"/>
</dbReference>
<dbReference type="GO" id="GO:0006282">
    <property type="term" value="P:regulation of DNA repair"/>
    <property type="evidence" value="ECO:0000314"/>
    <property type="project" value="ComplexPortal"/>
</dbReference>
<dbReference type="GO" id="GO:0006275">
    <property type="term" value="P:regulation of DNA replication"/>
    <property type="evidence" value="ECO:0000266"/>
    <property type="project" value="ComplexPortal"/>
</dbReference>
<dbReference type="GO" id="GO:0060382">
    <property type="term" value="P:regulation of DNA strand elongation"/>
    <property type="evidence" value="ECO:0000266"/>
    <property type="project" value="ComplexPortal"/>
</dbReference>
<dbReference type="GO" id="GO:0045995">
    <property type="term" value="P:regulation of embryonic development"/>
    <property type="evidence" value="ECO:0000315"/>
    <property type="project" value="ComplexPortal"/>
</dbReference>
<dbReference type="GO" id="GO:0000723">
    <property type="term" value="P:telomere maintenance"/>
    <property type="evidence" value="ECO:0000315"/>
    <property type="project" value="ComplexPortal"/>
</dbReference>
<dbReference type="InterPro" id="IPR025927">
    <property type="entry name" value="Potential_DNA-bd"/>
</dbReference>
<dbReference type="PANTHER" id="PTHR16198">
    <property type="match status" value="1"/>
</dbReference>
<dbReference type="PANTHER" id="PTHR16198:SF2">
    <property type="entry name" value="INO80 COMPLEX SUBUNIT D"/>
    <property type="match status" value="1"/>
</dbReference>
<dbReference type="Pfam" id="PF13891">
    <property type="entry name" value="zf-C3Hc3H"/>
    <property type="match status" value="2"/>
</dbReference>
<evidence type="ECO:0000250" key="1"/>
<evidence type="ECO:0000250" key="2">
    <source>
        <dbReference type="UniProtKB" id="Q53TQ3"/>
    </source>
</evidence>
<evidence type="ECO:0000256" key="3">
    <source>
        <dbReference type="SAM" id="MobiDB-lite"/>
    </source>
</evidence>
<evidence type="ECO:0000305" key="4"/>
<evidence type="ECO:0000312" key="5">
    <source>
        <dbReference type="MGI" id="MGI:3027003"/>
    </source>
</evidence>
<protein>
    <recommendedName>
        <fullName evidence="4">INO80 complex subunit D</fullName>
    </recommendedName>
</protein>